<reference key="1">
    <citation type="journal article" date="2004" name="Nat. Biotechnol.">
        <title>The genome sequence of the extreme thermophile Thermus thermophilus.</title>
        <authorList>
            <person name="Henne A."/>
            <person name="Brueggemann H."/>
            <person name="Raasch C."/>
            <person name="Wiezer A."/>
            <person name="Hartsch T."/>
            <person name="Liesegang H."/>
            <person name="Johann A."/>
            <person name="Lienard T."/>
            <person name="Gohl O."/>
            <person name="Martinez-Arias R."/>
            <person name="Jacobi C."/>
            <person name="Starkuviene V."/>
            <person name="Schlenczeck S."/>
            <person name="Dencker S."/>
            <person name="Huber R."/>
            <person name="Klenk H.-P."/>
            <person name="Kramer W."/>
            <person name="Merkl R."/>
            <person name="Gottschalk G."/>
            <person name="Fritz H.-J."/>
        </authorList>
    </citation>
    <scope>NUCLEOTIDE SEQUENCE [LARGE SCALE GENOMIC DNA]</scope>
    <source>
        <strain>ATCC BAA-163 / DSM 7039 / HB27</strain>
    </source>
</reference>
<reference key="2">
    <citation type="journal article" date="2002" name="EMBO J.">
        <title>Class I tyrosyl-tRNA synthetase has a class II mode of cognate tRNA recognition.</title>
        <authorList>
            <person name="Yaremchuk A."/>
            <person name="Kriklivyi I."/>
            <person name="Tukalo M."/>
            <person name="Cusack S."/>
        </authorList>
    </citation>
    <scope>X-RAY CRYSTALLOGRAPHY (2.0 ANGSTROMS)</scope>
</reference>
<proteinExistence type="evidence at protein level"/>
<keyword id="KW-0002">3D-structure</keyword>
<keyword id="KW-0030">Aminoacyl-tRNA synthetase</keyword>
<keyword id="KW-0067">ATP-binding</keyword>
<keyword id="KW-0963">Cytoplasm</keyword>
<keyword id="KW-0436">Ligase</keyword>
<keyword id="KW-0547">Nucleotide-binding</keyword>
<keyword id="KW-0648">Protein biosynthesis</keyword>
<keyword id="KW-0694">RNA-binding</keyword>
<comment type="function">
    <text evidence="1">Catalyzes the attachment of tyrosine to tRNA(Tyr) in a two-step reaction: tyrosine is first activated by ATP to form Tyr-AMP and then transferred to the acceptor end of tRNA(Tyr).</text>
</comment>
<comment type="catalytic activity">
    <reaction evidence="1">
        <text>tRNA(Tyr) + L-tyrosine + ATP = L-tyrosyl-tRNA(Tyr) + AMP + diphosphate + H(+)</text>
        <dbReference type="Rhea" id="RHEA:10220"/>
        <dbReference type="Rhea" id="RHEA-COMP:9706"/>
        <dbReference type="Rhea" id="RHEA-COMP:9707"/>
        <dbReference type="ChEBI" id="CHEBI:15378"/>
        <dbReference type="ChEBI" id="CHEBI:30616"/>
        <dbReference type="ChEBI" id="CHEBI:33019"/>
        <dbReference type="ChEBI" id="CHEBI:58315"/>
        <dbReference type="ChEBI" id="CHEBI:78442"/>
        <dbReference type="ChEBI" id="CHEBI:78536"/>
        <dbReference type="ChEBI" id="CHEBI:456215"/>
        <dbReference type="EC" id="6.1.1.1"/>
    </reaction>
</comment>
<comment type="subunit">
    <text>Homodimer.</text>
</comment>
<comment type="subcellular location">
    <subcellularLocation>
        <location evidence="1">Cytoplasm</location>
    </subcellularLocation>
</comment>
<comment type="miscellaneous">
    <text>Although this protein is a class I aminoacyl-tRNA synthetase, it displays a class II mode of tRNA recognition.</text>
</comment>
<comment type="similarity">
    <text evidence="1">Belongs to the class-I aminoacyl-tRNA synthetase family. TyrS type 2 subfamily.</text>
</comment>
<sequence length="432" mass="48718">MAGTGHTPEEALALLKRGAEEIVPEEELLAKLKEGRPLTVKLGADPTRPDLHLGHAVVLRKMRQFQELGHKVVLIIGDFTGMIGDPSGRSKTRPPLTLEETRENAKTYVAQAGKILRQEPHLFELRYNSEWLEGLTFKEVVRLTSLMTVAQMLEREDFKKRYEAGIPISLHELLYPFAQAYDSVAIRADVEMGGTDQRFNLLVGREVQRAYGQSPQVCFLMPLLVGLDGREKMSKSLDNYIGLTEPPEAMFKKLMRVPDPLLPSYFRLLTDLEEEEIEALLKAGPVPAHRVLARLLTAAYALPQIPPRIDRAFYESLGYAWEAFGRDKEAGPEEVRRAEARYDEVAKGGIPEEIPEVTIPASELKEGRIWVARLFTLAGLTPSNAEARRLIQNRGLRLDGEVLTDPMLQVDLSRPRILQRGKDRFVRVRLSD</sequence>
<feature type="chain" id="PRO_0000055665" description="Tyrosine--tRNA ligase">
    <location>
        <begin position="1"/>
        <end position="432"/>
    </location>
</feature>
<feature type="domain" description="S4 RNA-binding" evidence="1">
    <location>
        <begin position="369"/>
        <end position="430"/>
    </location>
</feature>
<feature type="short sequence motif" description="'HIGH' region">
    <location>
        <begin position="46"/>
        <end position="55"/>
    </location>
</feature>
<feature type="short sequence motif" description="'KMSKS' region">
    <location>
        <begin position="232"/>
        <end position="236"/>
    </location>
</feature>
<feature type="binding site">
    <location>
        <position position="235"/>
    </location>
    <ligand>
        <name>ATP</name>
        <dbReference type="ChEBI" id="CHEBI:30616"/>
    </ligand>
</feature>
<feature type="helix" evidence="3">
    <location>
        <begin position="8"/>
        <end position="16"/>
    </location>
</feature>
<feature type="strand" evidence="3">
    <location>
        <begin position="20"/>
        <end position="23"/>
    </location>
</feature>
<feature type="helix" evidence="3">
    <location>
        <begin position="25"/>
        <end position="33"/>
    </location>
</feature>
<feature type="strand" evidence="3">
    <location>
        <begin position="39"/>
        <end position="44"/>
    </location>
</feature>
<feature type="strand" evidence="2">
    <location>
        <begin position="47"/>
        <end position="49"/>
    </location>
</feature>
<feature type="helix" evidence="3">
    <location>
        <begin position="53"/>
        <end position="67"/>
    </location>
</feature>
<feature type="strand" evidence="3">
    <location>
        <begin position="71"/>
        <end position="76"/>
    </location>
</feature>
<feature type="helix" evidence="2">
    <location>
        <begin position="80"/>
        <end position="83"/>
    </location>
</feature>
<feature type="helix" evidence="3">
    <location>
        <begin position="102"/>
        <end position="112"/>
    </location>
</feature>
<feature type="turn" evidence="3">
    <location>
        <begin position="113"/>
        <end position="115"/>
    </location>
</feature>
<feature type="turn" evidence="3">
    <location>
        <begin position="120"/>
        <end position="122"/>
    </location>
</feature>
<feature type="strand" evidence="3">
    <location>
        <begin position="123"/>
        <end position="127"/>
    </location>
</feature>
<feature type="helix" evidence="3">
    <location>
        <begin position="129"/>
        <end position="132"/>
    </location>
</feature>
<feature type="helix" evidence="3">
    <location>
        <begin position="137"/>
        <end position="144"/>
    </location>
</feature>
<feature type="helix" evidence="3">
    <location>
        <begin position="149"/>
        <end position="152"/>
    </location>
</feature>
<feature type="helix" evidence="3">
    <location>
        <begin position="156"/>
        <end position="163"/>
    </location>
</feature>
<feature type="helix" evidence="3">
    <location>
        <begin position="170"/>
        <end position="173"/>
    </location>
</feature>
<feature type="helix" evidence="3">
    <location>
        <begin position="175"/>
        <end position="186"/>
    </location>
</feature>
<feature type="strand" evidence="3">
    <location>
        <begin position="189"/>
        <end position="194"/>
    </location>
</feature>
<feature type="helix" evidence="3">
    <location>
        <begin position="195"/>
        <end position="197"/>
    </location>
</feature>
<feature type="helix" evidence="3">
    <location>
        <begin position="198"/>
        <end position="210"/>
    </location>
</feature>
<feature type="strand" evidence="3">
    <location>
        <begin position="217"/>
        <end position="221"/>
    </location>
</feature>
<feature type="strand" evidence="3">
    <location>
        <begin position="229"/>
        <end position="232"/>
    </location>
</feature>
<feature type="helix" evidence="3">
    <location>
        <begin position="235"/>
        <end position="237"/>
    </location>
</feature>
<feature type="helix" evidence="3">
    <location>
        <begin position="247"/>
        <end position="255"/>
    </location>
</feature>
<feature type="helix" evidence="3">
    <location>
        <begin position="259"/>
        <end position="261"/>
    </location>
</feature>
<feature type="helix" evidence="3">
    <location>
        <begin position="262"/>
        <end position="269"/>
    </location>
</feature>
<feature type="helix" evidence="3">
    <location>
        <begin position="274"/>
        <end position="283"/>
    </location>
</feature>
<feature type="helix" evidence="3">
    <location>
        <begin position="285"/>
        <end position="301"/>
    </location>
</feature>
<feature type="strand" evidence="3">
    <location>
        <begin position="302"/>
        <end position="304"/>
    </location>
</feature>
<feature type="helix" evidence="3">
    <location>
        <begin position="311"/>
        <end position="316"/>
    </location>
</feature>
<feature type="helix" evidence="3">
    <location>
        <begin position="321"/>
        <end position="323"/>
    </location>
</feature>
<feature type="helix" evidence="3">
    <location>
        <begin position="333"/>
        <end position="345"/>
    </location>
</feature>
<feature type="strand" evidence="3">
    <location>
        <begin position="356"/>
        <end position="359"/>
    </location>
</feature>
<feature type="helix" evidence="3">
    <location>
        <begin position="361"/>
        <end position="363"/>
    </location>
</feature>
<feature type="strand" evidence="3">
    <location>
        <begin position="368"/>
        <end position="370"/>
    </location>
</feature>
<feature type="helix" evidence="3">
    <location>
        <begin position="371"/>
        <end position="377"/>
    </location>
</feature>
<feature type="strand" evidence="3">
    <location>
        <begin position="380"/>
        <end position="383"/>
    </location>
</feature>
<feature type="helix" evidence="3">
    <location>
        <begin position="384"/>
        <end position="392"/>
    </location>
</feature>
<feature type="strand" evidence="3">
    <location>
        <begin position="396"/>
        <end position="398"/>
    </location>
</feature>
<feature type="strand" evidence="3">
    <location>
        <begin position="409"/>
        <end position="411"/>
    </location>
</feature>
<feature type="strand" evidence="3">
    <location>
        <begin position="416"/>
        <end position="420"/>
    </location>
</feature>
<feature type="turn" evidence="3">
    <location>
        <begin position="421"/>
        <end position="423"/>
    </location>
</feature>
<feature type="strand" evidence="3">
    <location>
        <begin position="424"/>
        <end position="430"/>
    </location>
</feature>
<protein>
    <recommendedName>
        <fullName evidence="1">Tyrosine--tRNA ligase</fullName>
        <ecNumber evidence="1">6.1.1.1</ecNumber>
    </recommendedName>
    <alternativeName>
        <fullName evidence="1">Tyrosyl-tRNA synthetase</fullName>
        <shortName evidence="1">TyrRS</shortName>
    </alternativeName>
</protein>
<name>SYY_THET2</name>
<organism>
    <name type="scientific">Thermus thermophilus (strain ATCC BAA-163 / DSM 7039 / HB27)</name>
    <dbReference type="NCBI Taxonomy" id="262724"/>
    <lineage>
        <taxon>Bacteria</taxon>
        <taxon>Thermotogati</taxon>
        <taxon>Deinococcota</taxon>
        <taxon>Deinococci</taxon>
        <taxon>Thermales</taxon>
        <taxon>Thermaceae</taxon>
        <taxon>Thermus</taxon>
    </lineage>
</organism>
<evidence type="ECO:0000255" key="1">
    <source>
        <dbReference type="HAMAP-Rule" id="MF_02007"/>
    </source>
</evidence>
<evidence type="ECO:0007829" key="2">
    <source>
        <dbReference type="PDB" id="1H3E"/>
    </source>
</evidence>
<evidence type="ECO:0007829" key="3">
    <source>
        <dbReference type="PDB" id="1H3F"/>
    </source>
</evidence>
<dbReference type="EC" id="6.1.1.1" evidence="1"/>
<dbReference type="EMBL" id="AE017221">
    <property type="protein sequence ID" value="AAS81375.1"/>
    <property type="molecule type" value="Genomic_DNA"/>
</dbReference>
<dbReference type="RefSeq" id="WP_011173450.1">
    <property type="nucleotide sequence ID" value="NC_005835.1"/>
</dbReference>
<dbReference type="PDB" id="1H3E">
    <property type="method" value="X-ray"/>
    <property type="resolution" value="2.90 A"/>
    <property type="chains" value="A=1-432"/>
</dbReference>
<dbReference type="PDB" id="1H3F">
    <property type="method" value="X-ray"/>
    <property type="resolution" value="2.00 A"/>
    <property type="chains" value="A/B=1-432"/>
</dbReference>
<dbReference type="PDBsum" id="1H3E"/>
<dbReference type="PDBsum" id="1H3F"/>
<dbReference type="SMR" id="P83453"/>
<dbReference type="DrugBank" id="DB03978">
    <property type="generic name" value="Tyrosinal"/>
</dbReference>
<dbReference type="GeneID" id="3168499"/>
<dbReference type="KEGG" id="tth:TT_C1033"/>
<dbReference type="eggNOG" id="COG0162">
    <property type="taxonomic scope" value="Bacteria"/>
</dbReference>
<dbReference type="HOGENOM" id="CLU_024003_5_0_0"/>
<dbReference type="OrthoDB" id="9804243at2"/>
<dbReference type="EvolutionaryTrace" id="P83453"/>
<dbReference type="Proteomes" id="UP000000592">
    <property type="component" value="Chromosome"/>
</dbReference>
<dbReference type="GO" id="GO:0005829">
    <property type="term" value="C:cytosol"/>
    <property type="evidence" value="ECO:0007669"/>
    <property type="project" value="TreeGrafter"/>
</dbReference>
<dbReference type="GO" id="GO:0005524">
    <property type="term" value="F:ATP binding"/>
    <property type="evidence" value="ECO:0007669"/>
    <property type="project" value="UniProtKB-UniRule"/>
</dbReference>
<dbReference type="GO" id="GO:0003723">
    <property type="term" value="F:RNA binding"/>
    <property type="evidence" value="ECO:0007669"/>
    <property type="project" value="UniProtKB-KW"/>
</dbReference>
<dbReference type="GO" id="GO:0004831">
    <property type="term" value="F:tyrosine-tRNA ligase activity"/>
    <property type="evidence" value="ECO:0007669"/>
    <property type="project" value="UniProtKB-UniRule"/>
</dbReference>
<dbReference type="GO" id="GO:0006437">
    <property type="term" value="P:tyrosyl-tRNA aminoacylation"/>
    <property type="evidence" value="ECO:0007669"/>
    <property type="project" value="UniProtKB-UniRule"/>
</dbReference>
<dbReference type="CDD" id="cd00165">
    <property type="entry name" value="S4"/>
    <property type="match status" value="1"/>
</dbReference>
<dbReference type="CDD" id="cd00805">
    <property type="entry name" value="TyrRS_core"/>
    <property type="match status" value="1"/>
</dbReference>
<dbReference type="FunFam" id="3.40.50.620:FF:000061">
    <property type="entry name" value="Tyrosine--tRNA ligase"/>
    <property type="match status" value="1"/>
</dbReference>
<dbReference type="Gene3D" id="3.40.50.620">
    <property type="entry name" value="HUPs"/>
    <property type="match status" value="1"/>
</dbReference>
<dbReference type="Gene3D" id="3.10.290.10">
    <property type="entry name" value="RNA-binding S4 domain"/>
    <property type="match status" value="1"/>
</dbReference>
<dbReference type="Gene3D" id="1.10.240.10">
    <property type="entry name" value="Tyrosyl-Transfer RNA Synthetase"/>
    <property type="match status" value="1"/>
</dbReference>
<dbReference type="HAMAP" id="MF_02007">
    <property type="entry name" value="Tyr_tRNA_synth_type2"/>
    <property type="match status" value="1"/>
</dbReference>
<dbReference type="InterPro" id="IPR002305">
    <property type="entry name" value="aa-tRNA-synth_Ic"/>
</dbReference>
<dbReference type="InterPro" id="IPR014729">
    <property type="entry name" value="Rossmann-like_a/b/a_fold"/>
</dbReference>
<dbReference type="InterPro" id="IPR036986">
    <property type="entry name" value="S4_RNA-bd_sf"/>
</dbReference>
<dbReference type="InterPro" id="IPR002307">
    <property type="entry name" value="Tyr-tRNA-ligase"/>
</dbReference>
<dbReference type="InterPro" id="IPR024088">
    <property type="entry name" value="Tyr-tRNA-ligase_bac-type"/>
</dbReference>
<dbReference type="InterPro" id="IPR024108">
    <property type="entry name" value="Tyr-tRNA-ligase_bac_2"/>
</dbReference>
<dbReference type="NCBIfam" id="TIGR00234">
    <property type="entry name" value="tyrS"/>
    <property type="match status" value="1"/>
</dbReference>
<dbReference type="PANTHER" id="PTHR11766:SF1">
    <property type="entry name" value="TYROSINE--TRNA LIGASE"/>
    <property type="match status" value="1"/>
</dbReference>
<dbReference type="PANTHER" id="PTHR11766">
    <property type="entry name" value="TYROSYL-TRNA SYNTHETASE"/>
    <property type="match status" value="1"/>
</dbReference>
<dbReference type="Pfam" id="PF00579">
    <property type="entry name" value="tRNA-synt_1b"/>
    <property type="match status" value="1"/>
</dbReference>
<dbReference type="PRINTS" id="PR01040">
    <property type="entry name" value="TRNASYNTHTYR"/>
</dbReference>
<dbReference type="SUPFAM" id="SSF55174">
    <property type="entry name" value="Alpha-L RNA-binding motif"/>
    <property type="match status" value="1"/>
</dbReference>
<dbReference type="SUPFAM" id="SSF52374">
    <property type="entry name" value="Nucleotidylyl transferase"/>
    <property type="match status" value="1"/>
</dbReference>
<dbReference type="PROSITE" id="PS50889">
    <property type="entry name" value="S4"/>
    <property type="match status" value="1"/>
</dbReference>
<gene>
    <name evidence="1" type="primary">tyrS</name>
    <name type="ordered locus">TT_C1033</name>
</gene>
<accession>P83453</accession>